<comment type="function">
    <text evidence="1">This protein is one of the two subunits of integration host factor, a specific DNA-binding protein that functions in genetic recombination as well as in transcriptional and translational control.</text>
</comment>
<comment type="subunit">
    <text evidence="1">Heterodimer of an alpha and a beta chain.</text>
</comment>
<comment type="similarity">
    <text evidence="1">Belongs to the bacterial histone-like protein family.</text>
</comment>
<keyword id="KW-0233">DNA recombination</keyword>
<keyword id="KW-0238">DNA-binding</keyword>
<keyword id="KW-0804">Transcription</keyword>
<keyword id="KW-0805">Transcription regulation</keyword>
<keyword id="KW-0810">Translation regulation</keyword>
<gene>
    <name evidence="1" type="primary">ihfB</name>
    <name evidence="1" type="synonym">himD</name>
    <name type="ordered locus">Sputw3181_1972</name>
</gene>
<protein>
    <recommendedName>
        <fullName evidence="1">Integration host factor subunit beta</fullName>
        <shortName evidence="1">IHF-beta</shortName>
    </recommendedName>
</protein>
<sequence>MTKSELIEKLATRQSQLSAKEVESAIKEMLEQMATTLESGDRIEIRGFGSFSLHYRAPRTGRNPKTGSSVELEGKYVPHFKPGKELRERVDAVNV</sequence>
<evidence type="ECO:0000255" key="1">
    <source>
        <dbReference type="HAMAP-Rule" id="MF_00381"/>
    </source>
</evidence>
<dbReference type="EMBL" id="CP000503">
    <property type="protein sequence ID" value="ABM24806.1"/>
    <property type="molecule type" value="Genomic_DNA"/>
</dbReference>
<dbReference type="RefSeq" id="WP_007647758.1">
    <property type="nucleotide sequence ID" value="NC_008750.1"/>
</dbReference>
<dbReference type="SMR" id="A1RJG1"/>
<dbReference type="GeneID" id="67443575"/>
<dbReference type="KEGG" id="shw:Sputw3181_1972"/>
<dbReference type="HOGENOM" id="CLU_105066_2_0_6"/>
<dbReference type="Proteomes" id="UP000002597">
    <property type="component" value="Chromosome"/>
</dbReference>
<dbReference type="GO" id="GO:0005694">
    <property type="term" value="C:chromosome"/>
    <property type="evidence" value="ECO:0007669"/>
    <property type="project" value="InterPro"/>
</dbReference>
<dbReference type="GO" id="GO:0005829">
    <property type="term" value="C:cytosol"/>
    <property type="evidence" value="ECO:0007669"/>
    <property type="project" value="TreeGrafter"/>
</dbReference>
<dbReference type="GO" id="GO:0003677">
    <property type="term" value="F:DNA binding"/>
    <property type="evidence" value="ECO:0007669"/>
    <property type="project" value="UniProtKB-UniRule"/>
</dbReference>
<dbReference type="GO" id="GO:0030527">
    <property type="term" value="F:structural constituent of chromatin"/>
    <property type="evidence" value="ECO:0007669"/>
    <property type="project" value="InterPro"/>
</dbReference>
<dbReference type="GO" id="GO:0006310">
    <property type="term" value="P:DNA recombination"/>
    <property type="evidence" value="ECO:0007669"/>
    <property type="project" value="UniProtKB-UniRule"/>
</dbReference>
<dbReference type="GO" id="GO:0006355">
    <property type="term" value="P:regulation of DNA-templated transcription"/>
    <property type="evidence" value="ECO:0007669"/>
    <property type="project" value="UniProtKB-UniRule"/>
</dbReference>
<dbReference type="GO" id="GO:0006417">
    <property type="term" value="P:regulation of translation"/>
    <property type="evidence" value="ECO:0007669"/>
    <property type="project" value="UniProtKB-UniRule"/>
</dbReference>
<dbReference type="CDD" id="cd13836">
    <property type="entry name" value="IHF_B"/>
    <property type="match status" value="1"/>
</dbReference>
<dbReference type="FunFam" id="4.10.520.10:FF:000003">
    <property type="entry name" value="Integration host factor subunit beta"/>
    <property type="match status" value="1"/>
</dbReference>
<dbReference type="Gene3D" id="4.10.520.10">
    <property type="entry name" value="IHF-like DNA-binding proteins"/>
    <property type="match status" value="1"/>
</dbReference>
<dbReference type="HAMAP" id="MF_00381">
    <property type="entry name" value="IHF_beta"/>
    <property type="match status" value="1"/>
</dbReference>
<dbReference type="InterPro" id="IPR000119">
    <property type="entry name" value="Hist_DNA-bd"/>
</dbReference>
<dbReference type="InterPro" id="IPR020816">
    <property type="entry name" value="Histone-like_DNA-bd_CS"/>
</dbReference>
<dbReference type="InterPro" id="IPR010992">
    <property type="entry name" value="IHF-like_DNA-bd_dom_sf"/>
</dbReference>
<dbReference type="InterPro" id="IPR005685">
    <property type="entry name" value="IHF_beta"/>
</dbReference>
<dbReference type="NCBIfam" id="TIGR00988">
    <property type="entry name" value="hip"/>
    <property type="match status" value="1"/>
</dbReference>
<dbReference type="NCBIfam" id="NF001222">
    <property type="entry name" value="PRK00199.1"/>
    <property type="match status" value="1"/>
</dbReference>
<dbReference type="PANTHER" id="PTHR33175">
    <property type="entry name" value="DNA-BINDING PROTEIN HU"/>
    <property type="match status" value="1"/>
</dbReference>
<dbReference type="PANTHER" id="PTHR33175:SF5">
    <property type="entry name" value="INTEGRATION HOST FACTOR SUBUNIT BETA"/>
    <property type="match status" value="1"/>
</dbReference>
<dbReference type="Pfam" id="PF00216">
    <property type="entry name" value="Bac_DNA_binding"/>
    <property type="match status" value="1"/>
</dbReference>
<dbReference type="PRINTS" id="PR01727">
    <property type="entry name" value="DNABINDINGHU"/>
</dbReference>
<dbReference type="SMART" id="SM00411">
    <property type="entry name" value="BHL"/>
    <property type="match status" value="1"/>
</dbReference>
<dbReference type="SUPFAM" id="SSF47729">
    <property type="entry name" value="IHF-like DNA-binding proteins"/>
    <property type="match status" value="1"/>
</dbReference>
<dbReference type="PROSITE" id="PS00045">
    <property type="entry name" value="HISTONE_LIKE"/>
    <property type="match status" value="1"/>
</dbReference>
<name>IHFB_SHESW</name>
<accession>A1RJG1</accession>
<feature type="chain" id="PRO_1000060664" description="Integration host factor subunit beta">
    <location>
        <begin position="1"/>
        <end position="95"/>
    </location>
</feature>
<organism>
    <name type="scientific">Shewanella sp. (strain W3-18-1)</name>
    <dbReference type="NCBI Taxonomy" id="351745"/>
    <lineage>
        <taxon>Bacteria</taxon>
        <taxon>Pseudomonadati</taxon>
        <taxon>Pseudomonadota</taxon>
        <taxon>Gammaproteobacteria</taxon>
        <taxon>Alteromonadales</taxon>
        <taxon>Shewanellaceae</taxon>
        <taxon>Shewanella</taxon>
    </lineage>
</organism>
<reference key="1">
    <citation type="submission" date="2006-12" db="EMBL/GenBank/DDBJ databases">
        <title>Complete sequence of Shewanella sp. W3-18-1.</title>
        <authorList>
            <consortium name="US DOE Joint Genome Institute"/>
            <person name="Copeland A."/>
            <person name="Lucas S."/>
            <person name="Lapidus A."/>
            <person name="Barry K."/>
            <person name="Detter J.C."/>
            <person name="Glavina del Rio T."/>
            <person name="Hammon N."/>
            <person name="Israni S."/>
            <person name="Dalin E."/>
            <person name="Tice H."/>
            <person name="Pitluck S."/>
            <person name="Chain P."/>
            <person name="Malfatti S."/>
            <person name="Shin M."/>
            <person name="Vergez L."/>
            <person name="Schmutz J."/>
            <person name="Larimer F."/>
            <person name="Land M."/>
            <person name="Hauser L."/>
            <person name="Kyrpides N."/>
            <person name="Lykidis A."/>
            <person name="Tiedje J."/>
            <person name="Richardson P."/>
        </authorList>
    </citation>
    <scope>NUCLEOTIDE SEQUENCE [LARGE SCALE GENOMIC DNA]</scope>
    <source>
        <strain>W3-18-1</strain>
    </source>
</reference>
<proteinExistence type="inferred from homology"/>